<comment type="catalytic activity">
    <reaction evidence="1">
        <text>(4aS,6R)-4a-hydroxy-L-erythro-5,6,7,8-tetrahydrobiopterin = (6R)-L-erythro-6,7-dihydrobiopterin + H2O</text>
        <dbReference type="Rhea" id="RHEA:11920"/>
        <dbReference type="ChEBI" id="CHEBI:15377"/>
        <dbReference type="ChEBI" id="CHEBI:15642"/>
        <dbReference type="ChEBI" id="CHEBI:43120"/>
        <dbReference type="EC" id="4.2.1.96"/>
    </reaction>
</comment>
<comment type="similarity">
    <text evidence="1">Belongs to the pterin-4-alpha-carbinolamine dehydratase family.</text>
</comment>
<protein>
    <recommendedName>
        <fullName evidence="1">Putative pterin-4-alpha-carbinolamine dehydratase</fullName>
        <shortName evidence="1">PHS</shortName>
        <ecNumber evidence="1">4.2.1.96</ecNumber>
    </recommendedName>
    <alternativeName>
        <fullName evidence="1">4-alpha-hydroxy-tetrahydropterin dehydratase</fullName>
    </alternativeName>
    <alternativeName>
        <fullName evidence="1">Pterin carbinolamine dehydratase</fullName>
        <shortName evidence="1">PCD</shortName>
    </alternativeName>
</protein>
<accession>Q5P905</accession>
<keyword id="KW-0456">Lyase</keyword>
<keyword id="KW-1185">Reference proteome</keyword>
<proteinExistence type="inferred from homology"/>
<organism>
    <name type="scientific">Aromatoleum aromaticum (strain DSM 19018 / LMG 30748 / EbN1)</name>
    <name type="common">Azoarcus sp. (strain EbN1)</name>
    <dbReference type="NCBI Taxonomy" id="76114"/>
    <lineage>
        <taxon>Bacteria</taxon>
        <taxon>Pseudomonadati</taxon>
        <taxon>Pseudomonadota</taxon>
        <taxon>Betaproteobacteria</taxon>
        <taxon>Rhodocyclales</taxon>
        <taxon>Rhodocyclaceae</taxon>
        <taxon>Aromatoleum</taxon>
    </lineage>
</organism>
<feature type="chain" id="PRO_0000231440" description="Putative pterin-4-alpha-carbinolamine dehydratase">
    <location>
        <begin position="1"/>
        <end position="112"/>
    </location>
</feature>
<feature type="region of interest" description="Disordered" evidence="2">
    <location>
        <begin position="1"/>
        <end position="30"/>
    </location>
</feature>
<gene>
    <name type="ordered locus">AZOSEA00820</name>
    <name type="ORF">ebB5</name>
</gene>
<evidence type="ECO:0000255" key="1">
    <source>
        <dbReference type="HAMAP-Rule" id="MF_00434"/>
    </source>
</evidence>
<evidence type="ECO:0000256" key="2">
    <source>
        <dbReference type="SAM" id="MobiDB-lite"/>
    </source>
</evidence>
<sequence length="112" mass="12521">MSDELQSRTCTPCRGDVPPMTKAEAKRQLAQTPAWTLSDDGRCIERSFTFDDFKDAMSFVAKLGELAETEGHHPDICFGWGWARVTWQTKKINGLHDNDFIMAAKTDGLAPT</sequence>
<reference key="1">
    <citation type="journal article" date="2005" name="Arch. Microbiol.">
        <title>The genome sequence of an anaerobic aromatic-degrading denitrifying bacterium, strain EbN1.</title>
        <authorList>
            <person name="Rabus R."/>
            <person name="Kube M."/>
            <person name="Heider J."/>
            <person name="Beck A."/>
            <person name="Heitmann K."/>
            <person name="Widdel F."/>
            <person name="Reinhardt R."/>
        </authorList>
    </citation>
    <scope>NUCLEOTIDE SEQUENCE [LARGE SCALE GENOMIC DNA]</scope>
    <source>
        <strain>DSM 19018 / LMG 30748 / EbN1</strain>
    </source>
</reference>
<name>PHS_AROAE</name>
<dbReference type="EC" id="4.2.1.96" evidence="1"/>
<dbReference type="EMBL" id="CR555306">
    <property type="protein sequence ID" value="CAI06204.1"/>
    <property type="molecule type" value="Genomic_DNA"/>
</dbReference>
<dbReference type="RefSeq" id="WP_011235942.1">
    <property type="nucleotide sequence ID" value="NC_006513.1"/>
</dbReference>
<dbReference type="SMR" id="Q5P905"/>
<dbReference type="STRING" id="76114.ebB5"/>
<dbReference type="KEGG" id="eba:ebB5"/>
<dbReference type="eggNOG" id="COG2154">
    <property type="taxonomic scope" value="Bacteria"/>
</dbReference>
<dbReference type="HOGENOM" id="CLU_081974_2_2_4"/>
<dbReference type="OrthoDB" id="9794987at2"/>
<dbReference type="Proteomes" id="UP000006552">
    <property type="component" value="Chromosome"/>
</dbReference>
<dbReference type="GO" id="GO:0008124">
    <property type="term" value="F:4-alpha-hydroxytetrahydrobiopterin dehydratase activity"/>
    <property type="evidence" value="ECO:0007669"/>
    <property type="project" value="UniProtKB-UniRule"/>
</dbReference>
<dbReference type="GO" id="GO:0006729">
    <property type="term" value="P:tetrahydrobiopterin biosynthetic process"/>
    <property type="evidence" value="ECO:0007669"/>
    <property type="project" value="InterPro"/>
</dbReference>
<dbReference type="CDD" id="cd00913">
    <property type="entry name" value="PCD_DCoH_subfamily_a"/>
    <property type="match status" value="1"/>
</dbReference>
<dbReference type="Gene3D" id="3.30.1360.20">
    <property type="entry name" value="Transcriptional coactivator/pterin dehydratase"/>
    <property type="match status" value="1"/>
</dbReference>
<dbReference type="HAMAP" id="MF_00434">
    <property type="entry name" value="Pterin_4_alpha"/>
    <property type="match status" value="1"/>
</dbReference>
<dbReference type="InterPro" id="IPR036428">
    <property type="entry name" value="PCD_sf"/>
</dbReference>
<dbReference type="InterPro" id="IPR050376">
    <property type="entry name" value="Pterin-4-alpha-carb_dehyd"/>
</dbReference>
<dbReference type="InterPro" id="IPR001533">
    <property type="entry name" value="Pterin_deHydtase"/>
</dbReference>
<dbReference type="PANTHER" id="PTHR42805">
    <property type="entry name" value="PTERIN-4-ALPHA-CARBINOLAMINE DEHYDRATASE-RELATED"/>
    <property type="match status" value="1"/>
</dbReference>
<dbReference type="PANTHER" id="PTHR42805:SF1">
    <property type="entry name" value="PTERIN-4-ALPHA-CARBINOLAMINE DEHYDRATASE-RELATED"/>
    <property type="match status" value="1"/>
</dbReference>
<dbReference type="Pfam" id="PF01329">
    <property type="entry name" value="Pterin_4a"/>
    <property type="match status" value="1"/>
</dbReference>
<dbReference type="SUPFAM" id="SSF55248">
    <property type="entry name" value="PCD-like"/>
    <property type="match status" value="1"/>
</dbReference>